<reference key="1">
    <citation type="journal article" date="2004" name="Genome Res.">
        <title>The status, quality, and expansion of the NIH full-length cDNA project: the Mammalian Gene Collection (MGC).</title>
        <authorList>
            <consortium name="The MGC Project Team"/>
        </authorList>
    </citation>
    <scope>NUCLEOTIDE SEQUENCE [LARGE SCALE MRNA]</scope>
    <source>
        <tissue>Prostate</tissue>
    </source>
</reference>
<dbReference type="EC" id="2.4.1.-" evidence="2"/>
<dbReference type="EC" id="2.4.1.38" evidence="2"/>
<dbReference type="EC" id="2.4.1.90" evidence="2"/>
<dbReference type="EC" id="2.4.1.275"/>
<dbReference type="EMBL" id="BC061812">
    <property type="protein sequence ID" value="AAH61812.1"/>
    <property type="molecule type" value="mRNA"/>
</dbReference>
<dbReference type="RefSeq" id="NP_001009539.1">
    <property type="nucleotide sequence ID" value="NM_001009539.2"/>
</dbReference>
<dbReference type="RefSeq" id="NP_001416870.1">
    <property type="nucleotide sequence ID" value="NM_001429941.1"/>
</dbReference>
<dbReference type="RefSeq" id="NP_001416871.1">
    <property type="nucleotide sequence ID" value="NM_001429942.1"/>
</dbReference>
<dbReference type="RefSeq" id="NP_001416872.1">
    <property type="nucleotide sequence ID" value="NM_001429943.1"/>
</dbReference>
<dbReference type="RefSeq" id="XP_006250315.1">
    <property type="nucleotide sequence ID" value="XM_006250253.3"/>
</dbReference>
<dbReference type="RefSeq" id="XP_006250316.1">
    <property type="nucleotide sequence ID" value="XM_006250254.3"/>
</dbReference>
<dbReference type="SMR" id="Q6P768"/>
<dbReference type="FunCoup" id="Q6P768">
    <property type="interactions" value="2785"/>
</dbReference>
<dbReference type="STRING" id="10116.ENSRNOP00000004735"/>
<dbReference type="CAZy" id="GT7">
    <property type="family name" value="Glycosyltransferase Family 7"/>
</dbReference>
<dbReference type="GlyCosmos" id="Q6P768">
    <property type="glycosylation" value="4 sites, No reported glycans"/>
</dbReference>
<dbReference type="GlyGen" id="Q6P768">
    <property type="glycosylation" value="4 sites"/>
</dbReference>
<dbReference type="PhosphoSitePlus" id="Q6P768"/>
<dbReference type="PaxDb" id="10116-ENSRNOP00000004735"/>
<dbReference type="Ensembl" id="ENSRNOT00000004735.6">
    <property type="protein sequence ID" value="ENSRNOP00000004735.4"/>
    <property type="gene ID" value="ENSRNOG00000003551.6"/>
</dbReference>
<dbReference type="GeneID" id="494342"/>
<dbReference type="KEGG" id="rno:494342"/>
<dbReference type="UCSC" id="RGD:1359221">
    <property type="organism name" value="rat"/>
</dbReference>
<dbReference type="AGR" id="RGD:1359221"/>
<dbReference type="CTD" id="8703"/>
<dbReference type="RGD" id="1359221">
    <property type="gene designation" value="B4galt3"/>
</dbReference>
<dbReference type="eggNOG" id="KOG3916">
    <property type="taxonomic scope" value="Eukaryota"/>
</dbReference>
<dbReference type="GeneTree" id="ENSGT00940000158549"/>
<dbReference type="HOGENOM" id="CLU_044391_1_2_1"/>
<dbReference type="InParanoid" id="Q6P768"/>
<dbReference type="OMA" id="CDPGGPR"/>
<dbReference type="OrthoDB" id="10016069at2759"/>
<dbReference type="PhylomeDB" id="Q6P768"/>
<dbReference type="TreeFam" id="TF312834"/>
<dbReference type="Reactome" id="R-RNO-2022854">
    <property type="pathway name" value="Keratan sulfate biosynthesis"/>
</dbReference>
<dbReference type="Reactome" id="R-RNO-975577">
    <property type="pathway name" value="N-Glycan antennae elongation"/>
</dbReference>
<dbReference type="UniPathway" id="UPA00378"/>
<dbReference type="PRO" id="PR:Q6P768"/>
<dbReference type="Proteomes" id="UP000002494">
    <property type="component" value="Chromosome 13"/>
</dbReference>
<dbReference type="Bgee" id="ENSRNOG00000003551">
    <property type="expression patterns" value="Expressed in spleen and 20 other cell types or tissues"/>
</dbReference>
<dbReference type="GO" id="GO:0005829">
    <property type="term" value="C:cytosol"/>
    <property type="evidence" value="ECO:0007669"/>
    <property type="project" value="Ensembl"/>
</dbReference>
<dbReference type="GO" id="GO:0005794">
    <property type="term" value="C:Golgi apparatus"/>
    <property type="evidence" value="ECO:0000318"/>
    <property type="project" value="GO_Central"/>
</dbReference>
<dbReference type="GO" id="GO:0032580">
    <property type="term" value="C:Golgi cisterna membrane"/>
    <property type="evidence" value="ECO:0007669"/>
    <property type="project" value="UniProtKB-SubCell"/>
</dbReference>
<dbReference type="GO" id="GO:0003831">
    <property type="term" value="F:beta-N-acetylglucosaminylglycopeptide beta-1,4-galactosyltransferase activity"/>
    <property type="evidence" value="ECO:0007669"/>
    <property type="project" value="UniProtKB-EC"/>
</dbReference>
<dbReference type="GO" id="GO:0008378">
    <property type="term" value="F:galactosyltransferase activity"/>
    <property type="evidence" value="ECO:0000266"/>
    <property type="project" value="RGD"/>
</dbReference>
<dbReference type="GO" id="GO:0046872">
    <property type="term" value="F:metal ion binding"/>
    <property type="evidence" value="ECO:0007669"/>
    <property type="project" value="UniProtKB-KW"/>
</dbReference>
<dbReference type="GO" id="GO:0003945">
    <property type="term" value="F:N-acetyllactosamine synthase activity"/>
    <property type="evidence" value="ECO:0007669"/>
    <property type="project" value="UniProtKB-EC"/>
</dbReference>
<dbReference type="GO" id="GO:0005975">
    <property type="term" value="P:carbohydrate metabolic process"/>
    <property type="evidence" value="ECO:0007669"/>
    <property type="project" value="InterPro"/>
</dbReference>
<dbReference type="GO" id="GO:0006682">
    <property type="term" value="P:galactosylceramide biosynthetic process"/>
    <property type="evidence" value="ECO:0000266"/>
    <property type="project" value="RGD"/>
</dbReference>
<dbReference type="GO" id="GO:0070085">
    <property type="term" value="P:glycosylation"/>
    <property type="evidence" value="ECO:0000318"/>
    <property type="project" value="GO_Central"/>
</dbReference>
<dbReference type="GO" id="GO:0006486">
    <property type="term" value="P:protein glycosylation"/>
    <property type="evidence" value="ECO:0007669"/>
    <property type="project" value="UniProtKB-UniPathway"/>
</dbReference>
<dbReference type="CDD" id="cd00899">
    <property type="entry name" value="b4GalT"/>
    <property type="match status" value="1"/>
</dbReference>
<dbReference type="FunFam" id="3.90.550.10:FF:000028">
    <property type="entry name" value="beta-1,4-galactosyltransferase 1"/>
    <property type="match status" value="1"/>
</dbReference>
<dbReference type="Gene3D" id="3.90.550.10">
    <property type="entry name" value="Spore Coat Polysaccharide Biosynthesis Protein SpsA, Chain A"/>
    <property type="match status" value="1"/>
</dbReference>
<dbReference type="InterPro" id="IPR003859">
    <property type="entry name" value="Galactosyl_T"/>
</dbReference>
<dbReference type="InterPro" id="IPR027791">
    <property type="entry name" value="Galactosyl_T_C"/>
</dbReference>
<dbReference type="InterPro" id="IPR027995">
    <property type="entry name" value="Galactosyl_T_N"/>
</dbReference>
<dbReference type="InterPro" id="IPR029044">
    <property type="entry name" value="Nucleotide-diphossugar_trans"/>
</dbReference>
<dbReference type="PANTHER" id="PTHR19300">
    <property type="entry name" value="BETA-1,4-GALACTOSYLTRANSFERASE"/>
    <property type="match status" value="1"/>
</dbReference>
<dbReference type="PANTHER" id="PTHR19300:SF33">
    <property type="entry name" value="BETA-1,4-GALACTOSYLTRANSFERASE 3"/>
    <property type="match status" value="1"/>
</dbReference>
<dbReference type="Pfam" id="PF02709">
    <property type="entry name" value="Glyco_transf_7C"/>
    <property type="match status" value="1"/>
</dbReference>
<dbReference type="Pfam" id="PF13733">
    <property type="entry name" value="Glyco_transf_7N"/>
    <property type="match status" value="1"/>
</dbReference>
<dbReference type="PRINTS" id="PR02050">
    <property type="entry name" value="B14GALTRFASE"/>
</dbReference>
<dbReference type="SUPFAM" id="SSF53448">
    <property type="entry name" value="Nucleotide-diphospho-sugar transferases"/>
    <property type="match status" value="1"/>
</dbReference>
<proteinExistence type="evidence at transcript level"/>
<evidence type="ECO:0000250" key="1"/>
<evidence type="ECO:0000250" key="2">
    <source>
        <dbReference type="UniProtKB" id="O60512"/>
    </source>
</evidence>
<evidence type="ECO:0000255" key="3"/>
<evidence type="ECO:0000256" key="4">
    <source>
        <dbReference type="SAM" id="MobiDB-lite"/>
    </source>
</evidence>
<evidence type="ECO:0000305" key="5"/>
<evidence type="ECO:0000312" key="6">
    <source>
        <dbReference type="RGD" id="1359221"/>
    </source>
</evidence>
<organism>
    <name type="scientific">Rattus norvegicus</name>
    <name type="common">Rat</name>
    <dbReference type="NCBI Taxonomy" id="10116"/>
    <lineage>
        <taxon>Eukaryota</taxon>
        <taxon>Metazoa</taxon>
        <taxon>Chordata</taxon>
        <taxon>Craniata</taxon>
        <taxon>Vertebrata</taxon>
        <taxon>Euteleostomi</taxon>
        <taxon>Mammalia</taxon>
        <taxon>Eutheria</taxon>
        <taxon>Euarchontoglires</taxon>
        <taxon>Glires</taxon>
        <taxon>Rodentia</taxon>
        <taxon>Myomorpha</taxon>
        <taxon>Muroidea</taxon>
        <taxon>Muridae</taxon>
        <taxon>Murinae</taxon>
        <taxon>Rattus</taxon>
    </lineage>
</organism>
<keyword id="KW-1015">Disulfide bond</keyword>
<keyword id="KW-0325">Glycoprotein</keyword>
<keyword id="KW-0328">Glycosyltransferase</keyword>
<keyword id="KW-0333">Golgi apparatus</keyword>
<keyword id="KW-0443">Lipid metabolism</keyword>
<keyword id="KW-0464">Manganese</keyword>
<keyword id="KW-0472">Membrane</keyword>
<keyword id="KW-0479">Metal-binding</keyword>
<keyword id="KW-1185">Reference proteome</keyword>
<keyword id="KW-0735">Signal-anchor</keyword>
<keyword id="KW-0808">Transferase</keyword>
<keyword id="KW-0812">Transmembrane</keyword>
<keyword id="KW-1133">Transmembrane helix</keyword>
<accession>Q6P768</accession>
<gene>
    <name evidence="6" type="primary">B4galt3</name>
</gene>
<sequence length="395" mass="44031">MLRRLLERPCTLALLVGSQLAVMMYLSLGGFRSLSALFGRDPGPTFDYSHPHDVYSNLSHLPGAPGAAGAPLAQVLPDCPERSPFLVGPVSVSFSPVPSLAEIVERNPRVESGGRYRPAGCEPRSRTAIIVPHRAREHHLRLLLYHLHPFLQRQQLAYGIYVIHQAGNGTFNRAKLLNVGVREALRDEEWDCLFLHDVDLLPENDHNLYVCDPRGPRHVAVAMNKFGYSLPYPQYFGGVSALTPDQYLKMNGFPNEYWGWGGEDDDIATRVRLAGMKISRPPTSVGHYKMVKHRGDKGNEENPHRFDLLVRTQNSWTQDGMNSLTYRLLARELGPLYTNITADIGTDPRGPRAPSGPRYPPGSSQAFRQEMLQRRPPARPGPLPTANHTAPHGSH</sequence>
<protein>
    <recommendedName>
        <fullName evidence="5">Beta-1,4-galactosyltransferase 3</fullName>
        <shortName>Beta-1,4-GalTase 3</shortName>
        <shortName>Beta4Gal-T3</shortName>
        <shortName>b4Gal-T3</shortName>
        <ecNumber evidence="2">2.4.1.-</ecNumber>
    </recommendedName>
    <alternativeName>
        <fullName>Beta-N-acetylglucosaminylglycopeptide beta-1,4-galactosyltransferase</fullName>
        <ecNumber evidence="2">2.4.1.38</ecNumber>
    </alternativeName>
    <alternativeName>
        <fullName>N-acetyllactosamine synthase</fullName>
        <ecNumber evidence="2">2.4.1.90</ecNumber>
    </alternativeName>
    <alternativeName>
        <fullName>Nal synthase</fullName>
    </alternativeName>
    <alternativeName>
        <fullName>Neolactotriaosylceramide beta-1,4-galactosyltransferase</fullName>
        <ecNumber>2.4.1.275</ecNumber>
    </alternativeName>
    <alternativeName>
        <fullName>UDP-Gal:beta-GlcNAc beta-1,4-galactosyltransferase 3</fullName>
    </alternativeName>
    <alternativeName>
        <fullName>UDP-galactose:beta-N-acetylglucosamine beta-1,4-galactosyltransferase 3</fullName>
    </alternativeName>
</protein>
<feature type="chain" id="PRO_0000080540" description="Beta-1,4-galactosyltransferase 3">
    <location>
        <begin position="1"/>
        <end position="395"/>
    </location>
</feature>
<feature type="topological domain" description="Cytoplasmic" evidence="3">
    <location>
        <begin position="1"/>
        <end position="10"/>
    </location>
</feature>
<feature type="transmembrane region" description="Helical; Signal-anchor for type II membrane protein" evidence="3">
    <location>
        <begin position="11"/>
        <end position="31"/>
    </location>
</feature>
<feature type="topological domain" description="Lumenal" evidence="3">
    <location>
        <begin position="32"/>
        <end position="395"/>
    </location>
</feature>
<feature type="region of interest" description="Disordered" evidence="4">
    <location>
        <begin position="341"/>
        <end position="395"/>
    </location>
</feature>
<feature type="binding site" evidence="1">
    <location>
        <begin position="132"/>
        <end position="136"/>
    </location>
    <ligand>
        <name>UDP-alpha-D-galactose</name>
        <dbReference type="ChEBI" id="CHEBI:66914"/>
    </ligand>
</feature>
<feature type="binding site" evidence="1">
    <location>
        <begin position="171"/>
        <end position="173"/>
    </location>
    <ligand>
        <name>UDP-alpha-D-galactose</name>
        <dbReference type="ChEBI" id="CHEBI:66914"/>
    </ligand>
</feature>
<feature type="binding site" evidence="1">
    <location>
        <begin position="198"/>
        <end position="199"/>
    </location>
    <ligand>
        <name>UDP-alpha-D-galactose</name>
        <dbReference type="ChEBI" id="CHEBI:66914"/>
    </ligand>
</feature>
<feature type="binding site" evidence="1">
    <location>
        <position position="199"/>
    </location>
    <ligand>
        <name>Mn(2+)</name>
        <dbReference type="ChEBI" id="CHEBI:29035"/>
    </ligand>
</feature>
<feature type="binding site" evidence="1">
    <location>
        <position position="228"/>
    </location>
    <ligand>
        <name>UDP-alpha-D-galactose</name>
        <dbReference type="ChEBI" id="CHEBI:66914"/>
    </ligand>
</feature>
<feature type="binding site" evidence="1">
    <location>
        <position position="260"/>
    </location>
    <ligand>
        <name>UDP-alpha-D-galactose</name>
        <dbReference type="ChEBI" id="CHEBI:66914"/>
    </ligand>
</feature>
<feature type="binding site" evidence="1">
    <location>
        <begin position="262"/>
        <end position="265"/>
    </location>
    <ligand>
        <name>N-acetyl-D-glucosamine</name>
        <dbReference type="ChEBI" id="CHEBI:506227"/>
    </ligand>
</feature>
<feature type="binding site" evidence="1">
    <location>
        <begin position="293"/>
        <end position="295"/>
    </location>
    <ligand>
        <name>UDP-alpha-D-galactose</name>
        <dbReference type="ChEBI" id="CHEBI:66914"/>
    </ligand>
</feature>
<feature type="binding site" evidence="1">
    <location>
        <position position="293"/>
    </location>
    <ligand>
        <name>Mn(2+)</name>
        <dbReference type="ChEBI" id="CHEBI:29035"/>
    </ligand>
</feature>
<feature type="binding site" evidence="1">
    <location>
        <position position="305"/>
    </location>
    <ligand>
        <name>N-acetyl-D-glucosamine</name>
        <dbReference type="ChEBI" id="CHEBI:506227"/>
    </ligand>
</feature>
<feature type="glycosylation site" description="N-linked (GlcNAc...) asparagine" evidence="3">
    <location>
        <position position="57"/>
    </location>
</feature>
<feature type="glycosylation site" description="N-linked (GlcNAc...) asparagine" evidence="3">
    <location>
        <position position="168"/>
    </location>
</feature>
<feature type="glycosylation site" description="N-linked (GlcNAc...) asparagine" evidence="3">
    <location>
        <position position="339"/>
    </location>
</feature>
<feature type="glycosylation site" description="N-linked (GlcNAc...) asparagine" evidence="3">
    <location>
        <position position="387"/>
    </location>
</feature>
<feature type="disulfide bond" evidence="1">
    <location>
        <begin position="79"/>
        <end position="121"/>
    </location>
</feature>
<feature type="disulfide bond" evidence="1">
    <location>
        <begin position="192"/>
        <end position="211"/>
    </location>
</feature>
<name>B4GT3_RAT</name>
<comment type="function">
    <text evidence="2">Responsible for the synthesis of complex-type N-linked oligosaccharides in many glycoproteins as well as the carbohydrate moieties of glycolipids.</text>
</comment>
<comment type="catalytic activity">
    <reaction evidence="2">
        <text>an N-acetyl-beta-D-glucosaminyl derivative + UDP-alpha-D-galactose = a beta-D-galactosyl-(1-&gt;4)-N-acetyl-beta-D-glucosaminyl derivative + UDP + H(+)</text>
        <dbReference type="Rhea" id="RHEA:22932"/>
        <dbReference type="ChEBI" id="CHEBI:15378"/>
        <dbReference type="ChEBI" id="CHEBI:58223"/>
        <dbReference type="ChEBI" id="CHEBI:61631"/>
        <dbReference type="ChEBI" id="CHEBI:66914"/>
        <dbReference type="ChEBI" id="CHEBI:133507"/>
        <dbReference type="EC" id="2.4.1.38"/>
    </reaction>
    <physiologicalReaction direction="left-to-right" evidence="2">
        <dbReference type="Rhea" id="RHEA:22933"/>
    </physiologicalReaction>
</comment>
<comment type="catalytic activity">
    <reaction evidence="2">
        <text>N-acetyl-D-glucosamine + UDP-alpha-D-galactose = beta-D-galactosyl-(1-&gt;4)-N-acetyl-D-glucosamine + UDP + H(+)</text>
        <dbReference type="Rhea" id="RHEA:17745"/>
        <dbReference type="ChEBI" id="CHEBI:15378"/>
        <dbReference type="ChEBI" id="CHEBI:58223"/>
        <dbReference type="ChEBI" id="CHEBI:60152"/>
        <dbReference type="ChEBI" id="CHEBI:66914"/>
        <dbReference type="ChEBI" id="CHEBI:506227"/>
        <dbReference type="EC" id="2.4.1.90"/>
    </reaction>
    <physiologicalReaction direction="left-to-right" evidence="2">
        <dbReference type="Rhea" id="RHEA:17746"/>
    </physiologicalReaction>
</comment>
<comment type="catalytic activity">
    <reaction evidence="2">
        <text>a beta-D-GlcNAc-(1-&gt;3)-beta-D-Gal-(1-&gt;4)-beta-D-Glc-(1&lt;-&gt;1)-Cer(d18:1(4E)) + UDP-alpha-D-galactose = a neolactoside nLc4Cer(d18:1(4E)) + UDP + H(+)</text>
        <dbReference type="Rhea" id="RHEA:31499"/>
        <dbReference type="ChEBI" id="CHEBI:15378"/>
        <dbReference type="ChEBI" id="CHEBI:17006"/>
        <dbReference type="ChEBI" id="CHEBI:17103"/>
        <dbReference type="ChEBI" id="CHEBI:58223"/>
        <dbReference type="ChEBI" id="CHEBI:66914"/>
        <dbReference type="EC" id="2.4.1.275"/>
    </reaction>
    <physiologicalReaction direction="left-to-right" evidence="2">
        <dbReference type="Rhea" id="RHEA:31500"/>
    </physiologicalReaction>
</comment>
<comment type="catalytic activity">
    <reaction evidence="2">
        <text>a beta-D-glucosylceramide + UDP-alpha-D-galactose = a beta-D-galactosyl-(1-&gt;4)-beta-D-glucosyl-(1&lt;-&gt;1)-ceramide + UDP + H(+)</text>
        <dbReference type="Rhea" id="RHEA:62552"/>
        <dbReference type="ChEBI" id="CHEBI:15378"/>
        <dbReference type="ChEBI" id="CHEBI:58223"/>
        <dbReference type="ChEBI" id="CHEBI:66914"/>
        <dbReference type="ChEBI" id="CHEBI:79208"/>
        <dbReference type="ChEBI" id="CHEBI:83264"/>
    </reaction>
    <physiologicalReaction direction="left-to-right" evidence="2">
        <dbReference type="Rhea" id="RHEA:62553"/>
    </physiologicalReaction>
</comment>
<comment type="catalytic activity">
    <reaction evidence="2">
        <text>a neolactoside IV(3)-beta-GlcNAc-nLc4Cer + UDP-alpha-D-galactose = a neolactoside nLc6Cer + UDP + H(+)</text>
        <dbReference type="Rhea" id="RHEA:62548"/>
        <dbReference type="ChEBI" id="CHEBI:15378"/>
        <dbReference type="ChEBI" id="CHEBI:58223"/>
        <dbReference type="ChEBI" id="CHEBI:66914"/>
        <dbReference type="ChEBI" id="CHEBI:90357"/>
        <dbReference type="ChEBI" id="CHEBI:144378"/>
    </reaction>
    <physiologicalReaction direction="left-to-right" evidence="2">
        <dbReference type="Rhea" id="RHEA:62549"/>
    </physiologicalReaction>
</comment>
<comment type="cofactor">
    <cofactor evidence="1">
        <name>Mn(2+)</name>
        <dbReference type="ChEBI" id="CHEBI:29035"/>
    </cofactor>
</comment>
<comment type="pathway">
    <text evidence="2">Protein modification; protein glycosylation.</text>
</comment>
<comment type="subcellular location">
    <subcellularLocation>
        <location evidence="1">Golgi apparatus</location>
        <location evidence="1">Golgi stack membrane</location>
        <topology evidence="1">Single-pass type II membrane protein</topology>
    </subcellularLocation>
    <text evidence="1">Trans cisternae of Golgi stack.</text>
</comment>
<comment type="similarity">
    <text evidence="5">Belongs to the glycosyltransferase 7 family.</text>
</comment>